<accession>Q17XD2</accession>
<organism>
    <name type="scientific">Helicobacter acinonychis (strain Sheeba)</name>
    <dbReference type="NCBI Taxonomy" id="382638"/>
    <lineage>
        <taxon>Bacteria</taxon>
        <taxon>Pseudomonadati</taxon>
        <taxon>Campylobacterota</taxon>
        <taxon>Epsilonproteobacteria</taxon>
        <taxon>Campylobacterales</taxon>
        <taxon>Helicobacteraceae</taxon>
        <taxon>Helicobacter</taxon>
    </lineage>
</organism>
<name>TIG_HELAH</name>
<gene>
    <name evidence="1" type="primary">tig</name>
    <name type="ordered locus">Hac_0917</name>
</gene>
<comment type="function">
    <text evidence="1">Involved in protein export. Acts as a chaperone by maintaining the newly synthesized protein in an open conformation. Functions as a peptidyl-prolyl cis-trans isomerase.</text>
</comment>
<comment type="catalytic activity">
    <reaction evidence="1">
        <text>[protein]-peptidylproline (omega=180) = [protein]-peptidylproline (omega=0)</text>
        <dbReference type="Rhea" id="RHEA:16237"/>
        <dbReference type="Rhea" id="RHEA-COMP:10747"/>
        <dbReference type="Rhea" id="RHEA-COMP:10748"/>
        <dbReference type="ChEBI" id="CHEBI:83833"/>
        <dbReference type="ChEBI" id="CHEBI:83834"/>
        <dbReference type="EC" id="5.2.1.8"/>
    </reaction>
</comment>
<comment type="subcellular location">
    <subcellularLocation>
        <location>Cytoplasm</location>
    </subcellularLocation>
    <text evidence="1">About half TF is bound to the ribosome near the polypeptide exit tunnel while the other half is free in the cytoplasm.</text>
</comment>
<comment type="domain">
    <text evidence="1">Consists of 3 domains; the N-terminus binds the ribosome, the middle domain has PPIase activity, while the C-terminus has intrinsic chaperone activity on its own.</text>
</comment>
<comment type="similarity">
    <text evidence="1">Belongs to the FKBP-type PPIase family. Tig subfamily.</text>
</comment>
<protein>
    <recommendedName>
        <fullName evidence="1">Trigger factor</fullName>
        <shortName evidence="1">TF</shortName>
        <ecNumber evidence="1">5.2.1.8</ecNumber>
    </recommendedName>
    <alternativeName>
        <fullName evidence="1">PPIase</fullName>
    </alternativeName>
</protein>
<proteinExistence type="inferred from homology"/>
<sequence>MNLEVKKIDTANSHLSAKPSIEDLKKRYDKIAQKIAQKVKIDGFRRGKVPLSLVKTRYQAQIEQDAQEEMFQEILKNALKELGIESKDLIGSPNLTKFEKKDTHFEIEADIGLKPTIVLDKIKECVPSVEVEAVDEEKVNERLKQLAKDYAKFIDTDAQRKAQNDDKLTIDFEGFIDNVPFEGGKTQNFSLILGSKQMLEDFEKALLGMQAGEEKEFSLTFPSDYHAKHLAGKEALFKVKLHQIQAREVLEINDELAKIVLANEENAALELLKERVKGQLFLENKVRLYNEELKEKLIENLDEKILFDLPKTIIEQEMDLLFRNALYSMQAEEVKSLQENQEKAKEKRESFRNDATKSVKITFIIDALAKEEKIGVHDNEVFQTLYYEALMTGQNPENLIEQYRRNNMLAAVKMAMIEDRVLTYFLDKNLSKEQQEILEKMRPNAQKTQVS</sequence>
<keyword id="KW-0131">Cell cycle</keyword>
<keyword id="KW-0132">Cell division</keyword>
<keyword id="KW-0143">Chaperone</keyword>
<keyword id="KW-0963">Cytoplasm</keyword>
<keyword id="KW-0413">Isomerase</keyword>
<keyword id="KW-0697">Rotamase</keyword>
<evidence type="ECO:0000255" key="1">
    <source>
        <dbReference type="HAMAP-Rule" id="MF_00303"/>
    </source>
</evidence>
<reference key="1">
    <citation type="journal article" date="2006" name="PLoS Genet.">
        <title>Who ate whom? Adaptive Helicobacter genomic changes that accompanied a host jump from early humans to large felines.</title>
        <authorList>
            <person name="Eppinger M."/>
            <person name="Baar C."/>
            <person name="Linz B."/>
            <person name="Raddatz G."/>
            <person name="Lanz C."/>
            <person name="Keller H."/>
            <person name="Morelli G."/>
            <person name="Gressmann H."/>
            <person name="Achtman M."/>
            <person name="Schuster S.C."/>
        </authorList>
    </citation>
    <scope>NUCLEOTIDE SEQUENCE [LARGE SCALE GENOMIC DNA]</scope>
    <source>
        <strain>Sheeba</strain>
    </source>
</reference>
<dbReference type="EC" id="5.2.1.8" evidence="1"/>
<dbReference type="EMBL" id="AM260522">
    <property type="protein sequence ID" value="CAJ99694.1"/>
    <property type="molecule type" value="Genomic_DNA"/>
</dbReference>
<dbReference type="RefSeq" id="WP_011577806.1">
    <property type="nucleotide sequence ID" value="NC_008229.1"/>
</dbReference>
<dbReference type="SMR" id="Q17XD2"/>
<dbReference type="STRING" id="382638.Hac_0917"/>
<dbReference type="GeneID" id="31758315"/>
<dbReference type="KEGG" id="hac:Hac_0917"/>
<dbReference type="eggNOG" id="COG0544">
    <property type="taxonomic scope" value="Bacteria"/>
</dbReference>
<dbReference type="HOGENOM" id="CLU_033058_2_2_7"/>
<dbReference type="OrthoDB" id="9767721at2"/>
<dbReference type="BioCyc" id="HACI382638:HAC_RS03940-MONOMER"/>
<dbReference type="Proteomes" id="UP000000775">
    <property type="component" value="Chromosome"/>
</dbReference>
<dbReference type="GO" id="GO:0005737">
    <property type="term" value="C:cytoplasm"/>
    <property type="evidence" value="ECO:0007669"/>
    <property type="project" value="UniProtKB-SubCell"/>
</dbReference>
<dbReference type="GO" id="GO:0003755">
    <property type="term" value="F:peptidyl-prolyl cis-trans isomerase activity"/>
    <property type="evidence" value="ECO:0007669"/>
    <property type="project" value="UniProtKB-UniRule"/>
</dbReference>
<dbReference type="GO" id="GO:0051301">
    <property type="term" value="P:cell division"/>
    <property type="evidence" value="ECO:0007669"/>
    <property type="project" value="UniProtKB-KW"/>
</dbReference>
<dbReference type="GO" id="GO:0006457">
    <property type="term" value="P:protein folding"/>
    <property type="evidence" value="ECO:0007669"/>
    <property type="project" value="UniProtKB-UniRule"/>
</dbReference>
<dbReference type="GO" id="GO:0015031">
    <property type="term" value="P:protein transport"/>
    <property type="evidence" value="ECO:0007669"/>
    <property type="project" value="UniProtKB-UniRule"/>
</dbReference>
<dbReference type="FunFam" id="3.10.50.40:FF:000001">
    <property type="entry name" value="Trigger factor"/>
    <property type="match status" value="1"/>
</dbReference>
<dbReference type="Gene3D" id="3.10.50.40">
    <property type="match status" value="1"/>
</dbReference>
<dbReference type="Gene3D" id="3.30.70.1050">
    <property type="entry name" value="Trigger factor ribosome-binding domain"/>
    <property type="match status" value="1"/>
</dbReference>
<dbReference type="Gene3D" id="1.10.3120.10">
    <property type="entry name" value="Trigger factor, C-terminal domain"/>
    <property type="match status" value="1"/>
</dbReference>
<dbReference type="HAMAP" id="MF_00303">
    <property type="entry name" value="Trigger_factor_Tig"/>
    <property type="match status" value="1"/>
</dbReference>
<dbReference type="InterPro" id="IPR046357">
    <property type="entry name" value="PPIase_dom_sf"/>
</dbReference>
<dbReference type="InterPro" id="IPR001179">
    <property type="entry name" value="PPIase_FKBP_dom"/>
</dbReference>
<dbReference type="InterPro" id="IPR005215">
    <property type="entry name" value="Trig_fac"/>
</dbReference>
<dbReference type="InterPro" id="IPR008880">
    <property type="entry name" value="Trigger_fac_C"/>
</dbReference>
<dbReference type="InterPro" id="IPR037041">
    <property type="entry name" value="Trigger_fac_C_sf"/>
</dbReference>
<dbReference type="InterPro" id="IPR008881">
    <property type="entry name" value="Trigger_fac_ribosome-bd_bac"/>
</dbReference>
<dbReference type="InterPro" id="IPR036611">
    <property type="entry name" value="Trigger_fac_ribosome-bd_sf"/>
</dbReference>
<dbReference type="InterPro" id="IPR027304">
    <property type="entry name" value="Trigger_fact/SurA_dom_sf"/>
</dbReference>
<dbReference type="NCBIfam" id="TIGR00115">
    <property type="entry name" value="tig"/>
    <property type="match status" value="1"/>
</dbReference>
<dbReference type="Pfam" id="PF00254">
    <property type="entry name" value="FKBP_C"/>
    <property type="match status" value="1"/>
</dbReference>
<dbReference type="Pfam" id="PF05698">
    <property type="entry name" value="Trigger_C"/>
    <property type="match status" value="1"/>
</dbReference>
<dbReference type="Pfam" id="PF05697">
    <property type="entry name" value="Trigger_N"/>
    <property type="match status" value="1"/>
</dbReference>
<dbReference type="PIRSF" id="PIRSF003095">
    <property type="entry name" value="Trigger_factor"/>
    <property type="match status" value="1"/>
</dbReference>
<dbReference type="SUPFAM" id="SSF54534">
    <property type="entry name" value="FKBP-like"/>
    <property type="match status" value="1"/>
</dbReference>
<dbReference type="SUPFAM" id="SSF109998">
    <property type="entry name" value="Triger factor/SurA peptide-binding domain-like"/>
    <property type="match status" value="1"/>
</dbReference>
<dbReference type="SUPFAM" id="SSF102735">
    <property type="entry name" value="Trigger factor ribosome-binding domain"/>
    <property type="match status" value="1"/>
</dbReference>
<dbReference type="PROSITE" id="PS50059">
    <property type="entry name" value="FKBP_PPIASE"/>
    <property type="match status" value="1"/>
</dbReference>
<feature type="chain" id="PRO_1000022689" description="Trigger factor">
    <location>
        <begin position="1"/>
        <end position="451"/>
    </location>
</feature>
<feature type="domain" description="PPIase FKBP-type" evidence="1">
    <location>
        <begin position="165"/>
        <end position="250"/>
    </location>
</feature>